<protein>
    <recommendedName>
        <fullName evidence="1">Orotate phosphoribosyltransferase</fullName>
        <shortName evidence="1">OPRT</shortName>
        <shortName evidence="1">OPRTase</shortName>
        <ecNumber evidence="1">2.4.2.10</ecNumber>
    </recommendedName>
</protein>
<organism>
    <name type="scientific">Legionella pneumophila (strain Paris)</name>
    <dbReference type="NCBI Taxonomy" id="297246"/>
    <lineage>
        <taxon>Bacteria</taxon>
        <taxon>Pseudomonadati</taxon>
        <taxon>Pseudomonadota</taxon>
        <taxon>Gammaproteobacteria</taxon>
        <taxon>Legionellales</taxon>
        <taxon>Legionellaceae</taxon>
        <taxon>Legionella</taxon>
    </lineage>
</organism>
<proteinExistence type="inferred from homology"/>
<evidence type="ECO:0000255" key="1">
    <source>
        <dbReference type="HAMAP-Rule" id="MF_01208"/>
    </source>
</evidence>
<keyword id="KW-0328">Glycosyltransferase</keyword>
<keyword id="KW-0460">Magnesium</keyword>
<keyword id="KW-0665">Pyrimidine biosynthesis</keyword>
<keyword id="KW-0808">Transferase</keyword>
<reference key="1">
    <citation type="journal article" date="2004" name="Nat. Genet.">
        <title>Evidence in the Legionella pneumophila genome for exploitation of host cell functions and high genome plasticity.</title>
        <authorList>
            <person name="Cazalet C."/>
            <person name="Rusniok C."/>
            <person name="Brueggemann H."/>
            <person name="Zidane N."/>
            <person name="Magnier A."/>
            <person name="Ma L."/>
            <person name="Tichit M."/>
            <person name="Jarraud S."/>
            <person name="Bouchier C."/>
            <person name="Vandenesch F."/>
            <person name="Kunst F."/>
            <person name="Etienne J."/>
            <person name="Glaser P."/>
            <person name="Buchrieser C."/>
        </authorList>
    </citation>
    <scope>NUCLEOTIDE SEQUENCE [LARGE SCALE GENOMIC DNA]</scope>
    <source>
        <strain>Paris</strain>
    </source>
</reference>
<name>PYRE_LEGPA</name>
<feature type="chain" id="PRO_1000066248" description="Orotate phosphoribosyltransferase">
    <location>
        <begin position="1"/>
        <end position="210"/>
    </location>
</feature>
<feature type="binding site" description="in other chain" evidence="1">
    <location>
        <position position="26"/>
    </location>
    <ligand>
        <name>5-phospho-alpha-D-ribose 1-diphosphate</name>
        <dbReference type="ChEBI" id="CHEBI:58017"/>
        <note>ligand shared between dimeric partners</note>
    </ligand>
</feature>
<feature type="binding site" evidence="1">
    <location>
        <begin position="34"/>
        <end position="35"/>
    </location>
    <ligand>
        <name>orotate</name>
        <dbReference type="ChEBI" id="CHEBI:30839"/>
    </ligand>
</feature>
<feature type="binding site" description="in other chain" evidence="1">
    <location>
        <begin position="72"/>
        <end position="73"/>
    </location>
    <ligand>
        <name>5-phospho-alpha-D-ribose 1-diphosphate</name>
        <dbReference type="ChEBI" id="CHEBI:58017"/>
        <note>ligand shared between dimeric partners</note>
    </ligand>
</feature>
<feature type="binding site" evidence="1">
    <location>
        <position position="98"/>
    </location>
    <ligand>
        <name>5-phospho-alpha-D-ribose 1-diphosphate</name>
        <dbReference type="ChEBI" id="CHEBI:58017"/>
        <note>ligand shared between dimeric partners</note>
    </ligand>
</feature>
<feature type="binding site" description="in other chain" evidence="1">
    <location>
        <position position="99"/>
    </location>
    <ligand>
        <name>5-phospho-alpha-D-ribose 1-diphosphate</name>
        <dbReference type="ChEBI" id="CHEBI:58017"/>
        <note>ligand shared between dimeric partners</note>
    </ligand>
</feature>
<feature type="binding site" evidence="1">
    <location>
        <position position="102"/>
    </location>
    <ligand>
        <name>5-phospho-alpha-D-ribose 1-diphosphate</name>
        <dbReference type="ChEBI" id="CHEBI:58017"/>
        <note>ligand shared between dimeric partners</note>
    </ligand>
</feature>
<feature type="binding site" evidence="1">
    <location>
        <position position="104"/>
    </location>
    <ligand>
        <name>5-phospho-alpha-D-ribose 1-diphosphate</name>
        <dbReference type="ChEBI" id="CHEBI:58017"/>
        <note>ligand shared between dimeric partners</note>
    </ligand>
</feature>
<feature type="binding site" description="in other chain" evidence="1">
    <location>
        <begin position="123"/>
        <end position="131"/>
    </location>
    <ligand>
        <name>5-phospho-alpha-D-ribose 1-diphosphate</name>
        <dbReference type="ChEBI" id="CHEBI:58017"/>
        <note>ligand shared between dimeric partners</note>
    </ligand>
</feature>
<feature type="binding site" evidence="1">
    <location>
        <position position="127"/>
    </location>
    <ligand>
        <name>orotate</name>
        <dbReference type="ChEBI" id="CHEBI:30839"/>
    </ligand>
</feature>
<feature type="binding site" evidence="1">
    <location>
        <position position="155"/>
    </location>
    <ligand>
        <name>orotate</name>
        <dbReference type="ChEBI" id="CHEBI:30839"/>
    </ligand>
</feature>
<comment type="function">
    <text evidence="1">Catalyzes the transfer of a ribosyl phosphate group from 5-phosphoribose 1-diphosphate to orotate, leading to the formation of orotidine monophosphate (OMP).</text>
</comment>
<comment type="catalytic activity">
    <reaction evidence="1">
        <text>orotidine 5'-phosphate + diphosphate = orotate + 5-phospho-alpha-D-ribose 1-diphosphate</text>
        <dbReference type="Rhea" id="RHEA:10380"/>
        <dbReference type="ChEBI" id="CHEBI:30839"/>
        <dbReference type="ChEBI" id="CHEBI:33019"/>
        <dbReference type="ChEBI" id="CHEBI:57538"/>
        <dbReference type="ChEBI" id="CHEBI:58017"/>
        <dbReference type="EC" id="2.4.2.10"/>
    </reaction>
</comment>
<comment type="cofactor">
    <cofactor evidence="1">
        <name>Mg(2+)</name>
        <dbReference type="ChEBI" id="CHEBI:18420"/>
    </cofactor>
</comment>
<comment type="pathway">
    <text evidence="1">Pyrimidine metabolism; UMP biosynthesis via de novo pathway; UMP from orotate: step 1/2.</text>
</comment>
<comment type="subunit">
    <text evidence="1">Homodimer.</text>
</comment>
<comment type="similarity">
    <text evidence="1">Belongs to the purine/pyrimidine phosphoribosyltransferase family. PyrE subfamily.</text>
</comment>
<accession>Q5X5W4</accession>
<dbReference type="EC" id="2.4.2.10" evidence="1"/>
<dbReference type="EMBL" id="CR628336">
    <property type="protein sequence ID" value="CAH12357.1"/>
    <property type="molecule type" value="Genomic_DNA"/>
</dbReference>
<dbReference type="RefSeq" id="WP_010946936.1">
    <property type="nucleotide sequence ID" value="NC_006368.1"/>
</dbReference>
<dbReference type="SMR" id="Q5X5W4"/>
<dbReference type="GeneID" id="57035195"/>
<dbReference type="KEGG" id="lpp:lpp1206"/>
<dbReference type="LegioList" id="lpp1206"/>
<dbReference type="HOGENOM" id="CLU_074878_0_1_6"/>
<dbReference type="UniPathway" id="UPA00070">
    <property type="reaction ID" value="UER00119"/>
</dbReference>
<dbReference type="GO" id="GO:0005737">
    <property type="term" value="C:cytoplasm"/>
    <property type="evidence" value="ECO:0007669"/>
    <property type="project" value="TreeGrafter"/>
</dbReference>
<dbReference type="GO" id="GO:0000287">
    <property type="term" value="F:magnesium ion binding"/>
    <property type="evidence" value="ECO:0007669"/>
    <property type="project" value="UniProtKB-UniRule"/>
</dbReference>
<dbReference type="GO" id="GO:0004588">
    <property type="term" value="F:orotate phosphoribosyltransferase activity"/>
    <property type="evidence" value="ECO:0007669"/>
    <property type="project" value="UniProtKB-UniRule"/>
</dbReference>
<dbReference type="GO" id="GO:0006207">
    <property type="term" value="P:'de novo' pyrimidine nucleobase biosynthetic process"/>
    <property type="evidence" value="ECO:0007669"/>
    <property type="project" value="TreeGrafter"/>
</dbReference>
<dbReference type="GO" id="GO:0044205">
    <property type="term" value="P:'de novo' UMP biosynthetic process"/>
    <property type="evidence" value="ECO:0007669"/>
    <property type="project" value="UniProtKB-UniRule"/>
</dbReference>
<dbReference type="GO" id="GO:0046132">
    <property type="term" value="P:pyrimidine ribonucleoside biosynthetic process"/>
    <property type="evidence" value="ECO:0007669"/>
    <property type="project" value="TreeGrafter"/>
</dbReference>
<dbReference type="CDD" id="cd06223">
    <property type="entry name" value="PRTases_typeI"/>
    <property type="match status" value="1"/>
</dbReference>
<dbReference type="FunFam" id="3.40.50.2020:FF:000008">
    <property type="entry name" value="Orotate phosphoribosyltransferase"/>
    <property type="match status" value="1"/>
</dbReference>
<dbReference type="Gene3D" id="3.40.50.2020">
    <property type="match status" value="1"/>
</dbReference>
<dbReference type="HAMAP" id="MF_01208">
    <property type="entry name" value="PyrE"/>
    <property type="match status" value="1"/>
</dbReference>
<dbReference type="InterPro" id="IPR023031">
    <property type="entry name" value="OPRT"/>
</dbReference>
<dbReference type="InterPro" id="IPR004467">
    <property type="entry name" value="Or_phspho_trans_dom"/>
</dbReference>
<dbReference type="InterPro" id="IPR000836">
    <property type="entry name" value="PRibTrfase_dom"/>
</dbReference>
<dbReference type="InterPro" id="IPR029057">
    <property type="entry name" value="PRTase-like"/>
</dbReference>
<dbReference type="NCBIfam" id="TIGR00336">
    <property type="entry name" value="pyrE"/>
    <property type="match status" value="1"/>
</dbReference>
<dbReference type="PANTHER" id="PTHR46683">
    <property type="entry name" value="OROTATE PHOSPHORIBOSYLTRANSFERASE 1-RELATED"/>
    <property type="match status" value="1"/>
</dbReference>
<dbReference type="PANTHER" id="PTHR46683:SF1">
    <property type="entry name" value="OROTATE PHOSPHORIBOSYLTRANSFERASE 1-RELATED"/>
    <property type="match status" value="1"/>
</dbReference>
<dbReference type="SUPFAM" id="SSF53271">
    <property type="entry name" value="PRTase-like"/>
    <property type="match status" value="1"/>
</dbReference>
<dbReference type="PROSITE" id="PS00103">
    <property type="entry name" value="PUR_PYR_PR_TRANSFER"/>
    <property type="match status" value="1"/>
</dbReference>
<sequence length="210" mass="23492">MNHTKSSFIKLALECQVLKFGEFTLKSGRISPYFFNAGLFYHGDSLRKLGQFYAKTLLEQEVSFEHLFGPAYKGIPLATATAVALAELGRDITVTFNRKEVKTHGEGGQLIGSPLTGRTVIIDDVITAGTAFRESQTLIKENGGILRGVIIALDRCERGLTEKSTLSEIREQGIEVYSIINLFDLIEFLKNDNQYEQVQKLESYQERYGA</sequence>
<gene>
    <name evidence="1" type="primary">pyrE</name>
    <name type="ordered locus">lpp1206</name>
</gene>